<proteinExistence type="inferred from homology"/>
<sequence>MPSYPVSTVNTPDGQVNVLQITDLHLSSHVPASDDETSSEVAVCQYSFEAIIKQALSKEIRCDLIVVTGDLVNKVEPAIYDHIFTVLQDTGIPFACIAGNHDVTDETGEDLPFYQRTLITRAADPRLLSRHLIESEHWQLLLLDSSITGKVEGEITATDIDWVREQLASCTKPALIALHHHVLPVDSEWIDSHMAKNAEEFWQHILPFENLRVIINGHTHQEQTRHHQGVTVYSTPSTCYQFKPFEDNFAYDKKVRPGYRWLQLANNGKVASWVERLDT</sequence>
<dbReference type="EC" id="3.1.4.-" evidence="1"/>
<dbReference type="EMBL" id="CP000082">
    <property type="protein sequence ID" value="AAZ19883.1"/>
    <property type="molecule type" value="Genomic_DNA"/>
</dbReference>
<dbReference type="RefSeq" id="WP_011281290.1">
    <property type="nucleotide sequence ID" value="NC_007204.1"/>
</dbReference>
<dbReference type="SMR" id="Q4FQ25"/>
<dbReference type="STRING" id="259536.Psyc_2036"/>
<dbReference type="KEGG" id="par:Psyc_2036"/>
<dbReference type="eggNOG" id="COG1409">
    <property type="taxonomic scope" value="Bacteria"/>
</dbReference>
<dbReference type="HOGENOM" id="CLU_070320_0_0_6"/>
<dbReference type="OrthoDB" id="9784378at2"/>
<dbReference type="Proteomes" id="UP000000546">
    <property type="component" value="Chromosome"/>
</dbReference>
<dbReference type="GO" id="GO:0004115">
    <property type="term" value="F:3',5'-cyclic-AMP phosphodiesterase activity"/>
    <property type="evidence" value="ECO:0007669"/>
    <property type="project" value="UniProtKB-EC"/>
</dbReference>
<dbReference type="GO" id="GO:0046872">
    <property type="term" value="F:metal ion binding"/>
    <property type="evidence" value="ECO:0007669"/>
    <property type="project" value="UniProtKB-KW"/>
</dbReference>
<dbReference type="GO" id="GO:0000166">
    <property type="term" value="F:nucleotide binding"/>
    <property type="evidence" value="ECO:0007669"/>
    <property type="project" value="UniProtKB-KW"/>
</dbReference>
<dbReference type="Gene3D" id="3.60.21.10">
    <property type="match status" value="1"/>
</dbReference>
<dbReference type="InterPro" id="IPR004843">
    <property type="entry name" value="Calcineurin-like_PHP_ApaH"/>
</dbReference>
<dbReference type="InterPro" id="IPR050884">
    <property type="entry name" value="CNP_phosphodiesterase-III"/>
</dbReference>
<dbReference type="InterPro" id="IPR029052">
    <property type="entry name" value="Metallo-depent_PP-like"/>
</dbReference>
<dbReference type="PANTHER" id="PTHR42988:SF2">
    <property type="entry name" value="CYCLIC NUCLEOTIDE PHOSPHODIESTERASE CBUA0032-RELATED"/>
    <property type="match status" value="1"/>
</dbReference>
<dbReference type="PANTHER" id="PTHR42988">
    <property type="entry name" value="PHOSPHOHYDROLASE"/>
    <property type="match status" value="1"/>
</dbReference>
<dbReference type="Pfam" id="PF00149">
    <property type="entry name" value="Metallophos"/>
    <property type="match status" value="1"/>
</dbReference>
<dbReference type="SUPFAM" id="SSF56300">
    <property type="entry name" value="Metallo-dependent phosphatases"/>
    <property type="match status" value="1"/>
</dbReference>
<gene>
    <name type="ordered locus">Psyc_2036</name>
</gene>
<feature type="chain" id="PRO_0000413374" description="Probable cyclic nucleotide phosphodiesterase Psyc_2036">
    <location>
        <begin position="1"/>
        <end position="279"/>
    </location>
</feature>
<feature type="binding site" evidence="2">
    <location>
        <position position="23"/>
    </location>
    <ligand>
        <name>Fe cation</name>
        <dbReference type="ChEBI" id="CHEBI:24875"/>
        <label>1</label>
    </ligand>
</feature>
<feature type="binding site" evidence="1">
    <location>
        <position position="25"/>
    </location>
    <ligand>
        <name>AMP</name>
        <dbReference type="ChEBI" id="CHEBI:456215"/>
    </ligand>
</feature>
<feature type="binding site" evidence="2">
    <location>
        <position position="25"/>
    </location>
    <ligand>
        <name>Fe cation</name>
        <dbReference type="ChEBI" id="CHEBI:24875"/>
        <label>1</label>
    </ligand>
</feature>
<feature type="binding site" evidence="1">
    <location>
        <position position="70"/>
    </location>
    <ligand>
        <name>AMP</name>
        <dbReference type="ChEBI" id="CHEBI:456215"/>
    </ligand>
</feature>
<feature type="binding site" evidence="2">
    <location>
        <position position="70"/>
    </location>
    <ligand>
        <name>Fe cation</name>
        <dbReference type="ChEBI" id="CHEBI:24875"/>
        <label>1</label>
    </ligand>
</feature>
<feature type="binding site" evidence="2">
    <location>
        <position position="70"/>
    </location>
    <ligand>
        <name>Fe cation</name>
        <dbReference type="ChEBI" id="CHEBI:24875"/>
        <label>2</label>
    </ligand>
</feature>
<feature type="binding site" evidence="1">
    <location>
        <begin position="100"/>
        <end position="101"/>
    </location>
    <ligand>
        <name>AMP</name>
        <dbReference type="ChEBI" id="CHEBI:456215"/>
    </ligand>
</feature>
<feature type="binding site" evidence="2">
    <location>
        <position position="100"/>
    </location>
    <ligand>
        <name>Fe cation</name>
        <dbReference type="ChEBI" id="CHEBI:24875"/>
        <label>2</label>
    </ligand>
</feature>
<feature type="binding site" evidence="2">
    <location>
        <position position="179"/>
    </location>
    <ligand>
        <name>Fe cation</name>
        <dbReference type="ChEBI" id="CHEBI:24875"/>
        <label>2</label>
    </ligand>
</feature>
<feature type="binding site" evidence="2">
    <location>
        <position position="218"/>
    </location>
    <ligand>
        <name>Fe cation</name>
        <dbReference type="ChEBI" id="CHEBI:24875"/>
        <label>2</label>
    </ligand>
</feature>
<feature type="binding site" evidence="1">
    <location>
        <position position="220"/>
    </location>
    <ligand>
        <name>AMP</name>
        <dbReference type="ChEBI" id="CHEBI:456215"/>
    </ligand>
</feature>
<feature type="binding site" evidence="2">
    <location>
        <position position="220"/>
    </location>
    <ligand>
        <name>Fe cation</name>
        <dbReference type="ChEBI" id="CHEBI:24875"/>
        <label>1</label>
    </ligand>
</feature>
<keyword id="KW-0378">Hydrolase</keyword>
<keyword id="KW-0408">Iron</keyword>
<keyword id="KW-0479">Metal-binding</keyword>
<keyword id="KW-0547">Nucleotide-binding</keyword>
<keyword id="KW-1185">Reference proteome</keyword>
<organism>
    <name type="scientific">Psychrobacter arcticus (strain DSM 17307 / VKM B-2377 / 273-4)</name>
    <dbReference type="NCBI Taxonomy" id="259536"/>
    <lineage>
        <taxon>Bacteria</taxon>
        <taxon>Pseudomonadati</taxon>
        <taxon>Pseudomonadota</taxon>
        <taxon>Gammaproteobacteria</taxon>
        <taxon>Moraxellales</taxon>
        <taxon>Moraxellaceae</taxon>
        <taxon>Psychrobacter</taxon>
    </lineage>
</organism>
<accession>Q4FQ25</accession>
<comment type="cofactor">
    <cofactor evidence="2">
        <name>Fe(2+)</name>
        <dbReference type="ChEBI" id="CHEBI:29033"/>
    </cofactor>
    <text evidence="2">Binds 2 Fe(2+) ions per subunit.</text>
</comment>
<comment type="similarity">
    <text evidence="3">Belongs to the cyclic nucleotide phosphodiesterase class-III family.</text>
</comment>
<reference key="1">
    <citation type="journal article" date="2010" name="Appl. Environ. Microbiol.">
        <title>The genome sequence of Psychrobacter arcticus 273-4, a psychroactive Siberian permafrost bacterium, reveals mechanisms for adaptation to low-temperature growth.</title>
        <authorList>
            <person name="Ayala-del-Rio H.L."/>
            <person name="Chain P.S."/>
            <person name="Grzymski J.J."/>
            <person name="Ponder M.A."/>
            <person name="Ivanova N."/>
            <person name="Bergholz P.W."/>
            <person name="Di Bartolo G."/>
            <person name="Hauser L."/>
            <person name="Land M."/>
            <person name="Bakermans C."/>
            <person name="Rodrigues D."/>
            <person name="Klappenbach J."/>
            <person name="Zarka D."/>
            <person name="Larimer F."/>
            <person name="Richardson P."/>
            <person name="Murray A."/>
            <person name="Thomashow M."/>
            <person name="Tiedje J.M."/>
        </authorList>
    </citation>
    <scope>NUCLEOTIDE SEQUENCE [LARGE SCALE GENOMIC DNA]</scope>
    <source>
        <strain>DSM 17307 / VKM B-2377 / 273-4</strain>
    </source>
</reference>
<evidence type="ECO:0000250" key="1">
    <source>
        <dbReference type="UniProtKB" id="P9WP65"/>
    </source>
</evidence>
<evidence type="ECO:0000250" key="2">
    <source>
        <dbReference type="UniProtKB" id="Q6XBH1"/>
    </source>
</evidence>
<evidence type="ECO:0000305" key="3"/>
<protein>
    <recommendedName>
        <fullName evidence="1">Probable cyclic nucleotide phosphodiesterase Psyc_2036</fullName>
        <ecNumber evidence="1">3.1.4.-</ecNumber>
    </recommendedName>
</protein>
<name>CNPD3_PSYA2</name>